<keyword id="KW-0963">Cytoplasm</keyword>
<keyword id="KW-0378">Hydrolase</keyword>
<keyword id="KW-1185">Reference proteome</keyword>
<keyword id="KW-0694">RNA-binding</keyword>
<keyword id="KW-0820">tRNA-binding</keyword>
<protein>
    <recommendedName>
        <fullName evidence="1">Peptidyl-tRNA hydrolase</fullName>
        <shortName evidence="1">Pth</shortName>
        <ecNumber evidence="1">3.1.1.29</ecNumber>
    </recommendedName>
</protein>
<gene>
    <name evidence="1" type="primary">pth</name>
    <name type="ordered locus">Atu2230</name>
    <name type="ORF">AGR_C_4055</name>
</gene>
<evidence type="ECO:0000255" key="1">
    <source>
        <dbReference type="HAMAP-Rule" id="MF_00083"/>
    </source>
</evidence>
<evidence type="ECO:0000256" key="2">
    <source>
        <dbReference type="SAM" id="MobiDB-lite"/>
    </source>
</evidence>
<sequence length="238" mass="25797">MKIIAGLGNPGAQYAGNRHNIGFMAVDALQRLPSFAPWSKKFKAEISEGEIGGEKVLLMKPLTYMNLSGESVGEAMRFFKLTPADIIAIHDELDLLAGRTRIKIGGGHGGHNGLKSLDAHCGKEYRRLRLGIGHPGDKERVHGHVLGDFAKSDRVWLDPLLDAIADNAAMLVKGDDSQLMNKLALATGSKPEAEKPVKVAKPAAQSHIHQARNSAQPKKLPETGPMAEMLKRMFGKKD</sequence>
<feature type="chain" id="PRO_0000187678" description="Peptidyl-tRNA hydrolase">
    <location>
        <begin position="1"/>
        <end position="238"/>
    </location>
</feature>
<feature type="region of interest" description="Disordered" evidence="2">
    <location>
        <begin position="202"/>
        <end position="225"/>
    </location>
</feature>
<feature type="compositionally biased region" description="Polar residues" evidence="2">
    <location>
        <begin position="207"/>
        <end position="216"/>
    </location>
</feature>
<feature type="active site" description="Proton acceptor" evidence="1">
    <location>
        <position position="19"/>
    </location>
</feature>
<feature type="binding site" evidence="1">
    <location>
        <position position="14"/>
    </location>
    <ligand>
        <name>tRNA</name>
        <dbReference type="ChEBI" id="CHEBI:17843"/>
    </ligand>
</feature>
<feature type="binding site" evidence="1">
    <location>
        <position position="64"/>
    </location>
    <ligand>
        <name>tRNA</name>
        <dbReference type="ChEBI" id="CHEBI:17843"/>
    </ligand>
</feature>
<feature type="binding site" evidence="1">
    <location>
        <position position="66"/>
    </location>
    <ligand>
        <name>tRNA</name>
        <dbReference type="ChEBI" id="CHEBI:17843"/>
    </ligand>
</feature>
<feature type="binding site" evidence="1">
    <location>
        <position position="112"/>
    </location>
    <ligand>
        <name>tRNA</name>
        <dbReference type="ChEBI" id="CHEBI:17843"/>
    </ligand>
</feature>
<feature type="site" description="Discriminates between blocked and unblocked aminoacyl-tRNA" evidence="1">
    <location>
        <position position="9"/>
    </location>
</feature>
<feature type="site" description="Stabilizes the basic form of H active site to accept a proton" evidence="1">
    <location>
        <position position="91"/>
    </location>
</feature>
<name>PTH_AGRFC</name>
<accession>Q8UD97</accession>
<reference key="1">
    <citation type="journal article" date="2001" name="Science">
        <title>The genome of the natural genetic engineer Agrobacterium tumefaciens C58.</title>
        <authorList>
            <person name="Wood D.W."/>
            <person name="Setubal J.C."/>
            <person name="Kaul R."/>
            <person name="Monks D.E."/>
            <person name="Kitajima J.P."/>
            <person name="Okura V.K."/>
            <person name="Zhou Y."/>
            <person name="Chen L."/>
            <person name="Wood G.E."/>
            <person name="Almeida N.F. Jr."/>
            <person name="Woo L."/>
            <person name="Chen Y."/>
            <person name="Paulsen I.T."/>
            <person name="Eisen J.A."/>
            <person name="Karp P.D."/>
            <person name="Bovee D. Sr."/>
            <person name="Chapman P."/>
            <person name="Clendenning J."/>
            <person name="Deatherage G."/>
            <person name="Gillet W."/>
            <person name="Grant C."/>
            <person name="Kutyavin T."/>
            <person name="Levy R."/>
            <person name="Li M.-J."/>
            <person name="McClelland E."/>
            <person name="Palmieri A."/>
            <person name="Raymond C."/>
            <person name="Rouse G."/>
            <person name="Saenphimmachak C."/>
            <person name="Wu Z."/>
            <person name="Romero P."/>
            <person name="Gordon D."/>
            <person name="Zhang S."/>
            <person name="Yoo H."/>
            <person name="Tao Y."/>
            <person name="Biddle P."/>
            <person name="Jung M."/>
            <person name="Krespan W."/>
            <person name="Perry M."/>
            <person name="Gordon-Kamm B."/>
            <person name="Liao L."/>
            <person name="Kim S."/>
            <person name="Hendrick C."/>
            <person name="Zhao Z.-Y."/>
            <person name="Dolan M."/>
            <person name="Chumley F."/>
            <person name="Tingey S.V."/>
            <person name="Tomb J.-F."/>
            <person name="Gordon M.P."/>
            <person name="Olson M.V."/>
            <person name="Nester E.W."/>
        </authorList>
    </citation>
    <scope>NUCLEOTIDE SEQUENCE [LARGE SCALE GENOMIC DNA]</scope>
    <source>
        <strain>C58 / ATCC 33970</strain>
    </source>
</reference>
<reference key="2">
    <citation type="journal article" date="2001" name="Science">
        <title>Genome sequence of the plant pathogen and biotechnology agent Agrobacterium tumefaciens C58.</title>
        <authorList>
            <person name="Goodner B."/>
            <person name="Hinkle G."/>
            <person name="Gattung S."/>
            <person name="Miller N."/>
            <person name="Blanchard M."/>
            <person name="Qurollo B."/>
            <person name="Goldman B.S."/>
            <person name="Cao Y."/>
            <person name="Askenazi M."/>
            <person name="Halling C."/>
            <person name="Mullin L."/>
            <person name="Houmiel K."/>
            <person name="Gordon J."/>
            <person name="Vaudin M."/>
            <person name="Iartchouk O."/>
            <person name="Epp A."/>
            <person name="Liu F."/>
            <person name="Wollam C."/>
            <person name="Allinger M."/>
            <person name="Doughty D."/>
            <person name="Scott C."/>
            <person name="Lappas C."/>
            <person name="Markelz B."/>
            <person name="Flanagan C."/>
            <person name="Crowell C."/>
            <person name="Gurson J."/>
            <person name="Lomo C."/>
            <person name="Sear C."/>
            <person name="Strub G."/>
            <person name="Cielo C."/>
            <person name="Slater S."/>
        </authorList>
    </citation>
    <scope>NUCLEOTIDE SEQUENCE [LARGE SCALE GENOMIC DNA]</scope>
    <source>
        <strain>C58 / ATCC 33970</strain>
    </source>
</reference>
<proteinExistence type="inferred from homology"/>
<comment type="function">
    <text evidence="1">Hydrolyzes ribosome-free peptidyl-tRNAs (with 1 or more amino acids incorporated), which drop off the ribosome during protein synthesis, or as a result of ribosome stalling.</text>
</comment>
<comment type="function">
    <text evidence="1">Catalyzes the release of premature peptidyl moieties from peptidyl-tRNA molecules trapped in stalled 50S ribosomal subunits, and thus maintains levels of free tRNAs and 50S ribosomes.</text>
</comment>
<comment type="catalytic activity">
    <reaction evidence="1">
        <text>an N-acyl-L-alpha-aminoacyl-tRNA + H2O = an N-acyl-L-amino acid + a tRNA + H(+)</text>
        <dbReference type="Rhea" id="RHEA:54448"/>
        <dbReference type="Rhea" id="RHEA-COMP:10123"/>
        <dbReference type="Rhea" id="RHEA-COMP:13883"/>
        <dbReference type="ChEBI" id="CHEBI:15377"/>
        <dbReference type="ChEBI" id="CHEBI:15378"/>
        <dbReference type="ChEBI" id="CHEBI:59874"/>
        <dbReference type="ChEBI" id="CHEBI:78442"/>
        <dbReference type="ChEBI" id="CHEBI:138191"/>
        <dbReference type="EC" id="3.1.1.29"/>
    </reaction>
</comment>
<comment type="subunit">
    <text evidence="1">Monomer.</text>
</comment>
<comment type="subcellular location">
    <subcellularLocation>
        <location evidence="1">Cytoplasm</location>
    </subcellularLocation>
</comment>
<comment type="similarity">
    <text evidence="1">Belongs to the PTH family.</text>
</comment>
<dbReference type="EC" id="3.1.1.29" evidence="1"/>
<dbReference type="EMBL" id="AE007869">
    <property type="protein sequence ID" value="AAK87972.2"/>
    <property type="molecule type" value="Genomic_DNA"/>
</dbReference>
<dbReference type="PIR" id="AE2850">
    <property type="entry name" value="AE2850"/>
</dbReference>
<dbReference type="PIR" id="C97627">
    <property type="entry name" value="C97627"/>
</dbReference>
<dbReference type="RefSeq" id="NP_355187.2">
    <property type="nucleotide sequence ID" value="NC_003062.2"/>
</dbReference>
<dbReference type="RefSeq" id="WP_010972157.1">
    <property type="nucleotide sequence ID" value="NC_003062.2"/>
</dbReference>
<dbReference type="SMR" id="Q8UD97"/>
<dbReference type="STRING" id="176299.Atu2230"/>
<dbReference type="EnsemblBacteria" id="AAK87972">
    <property type="protein sequence ID" value="AAK87972"/>
    <property type="gene ID" value="Atu2230"/>
</dbReference>
<dbReference type="GeneID" id="1134268"/>
<dbReference type="KEGG" id="atu:Atu2230"/>
<dbReference type="PATRIC" id="fig|176299.10.peg.2239"/>
<dbReference type="eggNOG" id="COG0193">
    <property type="taxonomic scope" value="Bacteria"/>
</dbReference>
<dbReference type="HOGENOM" id="CLU_062456_1_1_5"/>
<dbReference type="OrthoDB" id="9800507at2"/>
<dbReference type="PhylomeDB" id="Q8UD97"/>
<dbReference type="BioCyc" id="AGRO:ATU2230-MONOMER"/>
<dbReference type="Proteomes" id="UP000000813">
    <property type="component" value="Chromosome circular"/>
</dbReference>
<dbReference type="GO" id="GO:0005737">
    <property type="term" value="C:cytoplasm"/>
    <property type="evidence" value="ECO:0007669"/>
    <property type="project" value="UniProtKB-SubCell"/>
</dbReference>
<dbReference type="GO" id="GO:0004045">
    <property type="term" value="F:peptidyl-tRNA hydrolase activity"/>
    <property type="evidence" value="ECO:0007669"/>
    <property type="project" value="UniProtKB-UniRule"/>
</dbReference>
<dbReference type="GO" id="GO:0000049">
    <property type="term" value="F:tRNA binding"/>
    <property type="evidence" value="ECO:0007669"/>
    <property type="project" value="UniProtKB-UniRule"/>
</dbReference>
<dbReference type="GO" id="GO:0006515">
    <property type="term" value="P:protein quality control for misfolded or incompletely synthesized proteins"/>
    <property type="evidence" value="ECO:0007669"/>
    <property type="project" value="UniProtKB-UniRule"/>
</dbReference>
<dbReference type="GO" id="GO:0072344">
    <property type="term" value="P:rescue of stalled ribosome"/>
    <property type="evidence" value="ECO:0007669"/>
    <property type="project" value="UniProtKB-UniRule"/>
</dbReference>
<dbReference type="CDD" id="cd00462">
    <property type="entry name" value="PTH"/>
    <property type="match status" value="1"/>
</dbReference>
<dbReference type="FunFam" id="3.40.50.1470:FF:000001">
    <property type="entry name" value="Peptidyl-tRNA hydrolase"/>
    <property type="match status" value="1"/>
</dbReference>
<dbReference type="Gene3D" id="3.40.50.1470">
    <property type="entry name" value="Peptidyl-tRNA hydrolase"/>
    <property type="match status" value="1"/>
</dbReference>
<dbReference type="HAMAP" id="MF_00083">
    <property type="entry name" value="Pept_tRNA_hydro_bact"/>
    <property type="match status" value="1"/>
</dbReference>
<dbReference type="InterPro" id="IPR001328">
    <property type="entry name" value="Pept_tRNA_hydro"/>
</dbReference>
<dbReference type="InterPro" id="IPR018171">
    <property type="entry name" value="Pept_tRNA_hydro_CS"/>
</dbReference>
<dbReference type="InterPro" id="IPR036416">
    <property type="entry name" value="Pept_tRNA_hydro_sf"/>
</dbReference>
<dbReference type="NCBIfam" id="TIGR00447">
    <property type="entry name" value="pth"/>
    <property type="match status" value="1"/>
</dbReference>
<dbReference type="PANTHER" id="PTHR17224">
    <property type="entry name" value="PEPTIDYL-TRNA HYDROLASE"/>
    <property type="match status" value="1"/>
</dbReference>
<dbReference type="PANTHER" id="PTHR17224:SF1">
    <property type="entry name" value="PEPTIDYL-TRNA HYDROLASE"/>
    <property type="match status" value="1"/>
</dbReference>
<dbReference type="Pfam" id="PF01195">
    <property type="entry name" value="Pept_tRNA_hydro"/>
    <property type="match status" value="1"/>
</dbReference>
<dbReference type="SUPFAM" id="SSF53178">
    <property type="entry name" value="Peptidyl-tRNA hydrolase-like"/>
    <property type="match status" value="1"/>
</dbReference>
<dbReference type="PROSITE" id="PS01195">
    <property type="entry name" value="PEPT_TRNA_HYDROL_1"/>
    <property type="match status" value="1"/>
</dbReference>
<dbReference type="PROSITE" id="PS01196">
    <property type="entry name" value="PEPT_TRNA_HYDROL_2"/>
    <property type="match status" value="1"/>
</dbReference>
<organism>
    <name type="scientific">Agrobacterium fabrum (strain C58 / ATCC 33970)</name>
    <name type="common">Agrobacterium tumefaciens (strain C58)</name>
    <dbReference type="NCBI Taxonomy" id="176299"/>
    <lineage>
        <taxon>Bacteria</taxon>
        <taxon>Pseudomonadati</taxon>
        <taxon>Pseudomonadota</taxon>
        <taxon>Alphaproteobacteria</taxon>
        <taxon>Hyphomicrobiales</taxon>
        <taxon>Rhizobiaceae</taxon>
        <taxon>Rhizobium/Agrobacterium group</taxon>
        <taxon>Agrobacterium</taxon>
        <taxon>Agrobacterium tumefaciens complex</taxon>
    </lineage>
</organism>